<gene>
    <name evidence="6" type="primary">CFAP126</name>
    <name evidence="6" type="synonym">C1orf192</name>
    <name evidence="2" type="synonym">FLTP</name>
</gene>
<reference key="1">
    <citation type="journal article" date="2006" name="Nature">
        <title>The DNA sequence and biological annotation of human chromosome 1.</title>
        <authorList>
            <person name="Gregory S.G."/>
            <person name="Barlow K.F."/>
            <person name="McLay K.E."/>
            <person name="Kaul R."/>
            <person name="Swarbreck D."/>
            <person name="Dunham A."/>
            <person name="Scott C.E."/>
            <person name="Howe K.L."/>
            <person name="Woodfine K."/>
            <person name="Spencer C.C.A."/>
            <person name="Jones M.C."/>
            <person name="Gillson C."/>
            <person name="Searle S."/>
            <person name="Zhou Y."/>
            <person name="Kokocinski F."/>
            <person name="McDonald L."/>
            <person name="Evans R."/>
            <person name="Phillips K."/>
            <person name="Atkinson A."/>
            <person name="Cooper R."/>
            <person name="Jones C."/>
            <person name="Hall R.E."/>
            <person name="Andrews T.D."/>
            <person name="Lloyd C."/>
            <person name="Ainscough R."/>
            <person name="Almeida J.P."/>
            <person name="Ambrose K.D."/>
            <person name="Anderson F."/>
            <person name="Andrew R.W."/>
            <person name="Ashwell R.I.S."/>
            <person name="Aubin K."/>
            <person name="Babbage A.K."/>
            <person name="Bagguley C.L."/>
            <person name="Bailey J."/>
            <person name="Beasley H."/>
            <person name="Bethel G."/>
            <person name="Bird C.P."/>
            <person name="Bray-Allen S."/>
            <person name="Brown J.Y."/>
            <person name="Brown A.J."/>
            <person name="Buckley D."/>
            <person name="Burton J."/>
            <person name="Bye J."/>
            <person name="Carder C."/>
            <person name="Chapman J.C."/>
            <person name="Clark S.Y."/>
            <person name="Clarke G."/>
            <person name="Clee C."/>
            <person name="Cobley V."/>
            <person name="Collier R.E."/>
            <person name="Corby N."/>
            <person name="Coville G.J."/>
            <person name="Davies J."/>
            <person name="Deadman R."/>
            <person name="Dunn M."/>
            <person name="Earthrowl M."/>
            <person name="Ellington A.G."/>
            <person name="Errington H."/>
            <person name="Frankish A."/>
            <person name="Frankland J."/>
            <person name="French L."/>
            <person name="Garner P."/>
            <person name="Garnett J."/>
            <person name="Gay L."/>
            <person name="Ghori M.R.J."/>
            <person name="Gibson R."/>
            <person name="Gilby L.M."/>
            <person name="Gillett W."/>
            <person name="Glithero R.J."/>
            <person name="Grafham D.V."/>
            <person name="Griffiths C."/>
            <person name="Griffiths-Jones S."/>
            <person name="Grocock R."/>
            <person name="Hammond S."/>
            <person name="Harrison E.S.I."/>
            <person name="Hart E."/>
            <person name="Haugen E."/>
            <person name="Heath P.D."/>
            <person name="Holmes S."/>
            <person name="Holt K."/>
            <person name="Howden P.J."/>
            <person name="Hunt A.R."/>
            <person name="Hunt S.E."/>
            <person name="Hunter G."/>
            <person name="Isherwood J."/>
            <person name="James R."/>
            <person name="Johnson C."/>
            <person name="Johnson D."/>
            <person name="Joy A."/>
            <person name="Kay M."/>
            <person name="Kershaw J.K."/>
            <person name="Kibukawa M."/>
            <person name="Kimberley A.M."/>
            <person name="King A."/>
            <person name="Knights A.J."/>
            <person name="Lad H."/>
            <person name="Laird G."/>
            <person name="Lawlor S."/>
            <person name="Leongamornlert D.A."/>
            <person name="Lloyd D.M."/>
            <person name="Loveland J."/>
            <person name="Lovell J."/>
            <person name="Lush M.J."/>
            <person name="Lyne R."/>
            <person name="Martin S."/>
            <person name="Mashreghi-Mohammadi M."/>
            <person name="Matthews L."/>
            <person name="Matthews N.S.W."/>
            <person name="McLaren S."/>
            <person name="Milne S."/>
            <person name="Mistry S."/>
            <person name="Moore M.J.F."/>
            <person name="Nickerson T."/>
            <person name="O'Dell C.N."/>
            <person name="Oliver K."/>
            <person name="Palmeiri A."/>
            <person name="Palmer S.A."/>
            <person name="Parker A."/>
            <person name="Patel D."/>
            <person name="Pearce A.V."/>
            <person name="Peck A.I."/>
            <person name="Pelan S."/>
            <person name="Phelps K."/>
            <person name="Phillimore B.J."/>
            <person name="Plumb R."/>
            <person name="Rajan J."/>
            <person name="Raymond C."/>
            <person name="Rouse G."/>
            <person name="Saenphimmachak C."/>
            <person name="Sehra H.K."/>
            <person name="Sheridan E."/>
            <person name="Shownkeen R."/>
            <person name="Sims S."/>
            <person name="Skuce C.D."/>
            <person name="Smith M."/>
            <person name="Steward C."/>
            <person name="Subramanian S."/>
            <person name="Sycamore N."/>
            <person name="Tracey A."/>
            <person name="Tromans A."/>
            <person name="Van Helmond Z."/>
            <person name="Wall M."/>
            <person name="Wallis J.M."/>
            <person name="White S."/>
            <person name="Whitehead S.L."/>
            <person name="Wilkinson J.E."/>
            <person name="Willey D.L."/>
            <person name="Williams H."/>
            <person name="Wilming L."/>
            <person name="Wray P.W."/>
            <person name="Wu Z."/>
            <person name="Coulson A."/>
            <person name="Vaudin M."/>
            <person name="Sulston J.E."/>
            <person name="Durbin R.M."/>
            <person name="Hubbard T."/>
            <person name="Wooster R."/>
            <person name="Dunham I."/>
            <person name="Carter N.P."/>
            <person name="McVean G."/>
            <person name="Ross M.T."/>
            <person name="Harrow J."/>
            <person name="Olson M.V."/>
            <person name="Beck S."/>
            <person name="Rogers J."/>
            <person name="Bentley D.R."/>
        </authorList>
    </citation>
    <scope>NUCLEOTIDE SEQUENCE [LARGE SCALE GENOMIC DNA]</scope>
</reference>
<reference key="2">
    <citation type="journal article" date="1996" name="Genome Res.">
        <title>Normalization and subtraction: two approaches to facilitate gene discovery.</title>
        <authorList>
            <person name="Bonaldo M.F."/>
            <person name="Lennon G."/>
            <person name="Soares M.B."/>
        </authorList>
    </citation>
    <scope>NUCLEOTIDE SEQUENCE [LARGE SCALE MRNA] OF 24-177</scope>
</reference>
<reference evidence="7" key="3">
    <citation type="journal article" date="2022" name="Proc. Natl. Acad. Sci. U.S.A.">
        <title>SPACA9 is a lumenal protein of human ciliary singlet and doublet microtubules.</title>
        <authorList>
            <person name="Gui M."/>
            <person name="Croft J.T."/>
            <person name="Zabeo D."/>
            <person name="Acharya V."/>
            <person name="Kollman J.M."/>
            <person name="Burgoyne T."/>
            <person name="Hoog J.L."/>
            <person name="Brown A."/>
        </authorList>
    </citation>
    <scope>STRUCTURE BY ELECTRON MICROSCOPY (3.60 ANGSTROMS)</scope>
    <scope>FUNCTION</scope>
    <scope>SUBCELLULAR LOCATION</scope>
    <scope>TISSUE SPECIFICITY</scope>
</reference>
<feature type="chain" id="PRO_0000316972" description="Protein Flattop">
    <location>
        <begin position="1"/>
        <end position="177"/>
    </location>
</feature>
<feature type="region of interest" description="Disordered" evidence="3">
    <location>
        <begin position="113"/>
        <end position="177"/>
    </location>
</feature>
<feature type="compositionally biased region" description="Basic and acidic residues" evidence="3">
    <location>
        <begin position="115"/>
        <end position="124"/>
    </location>
</feature>
<feature type="compositionally biased region" description="Polar residues" evidence="3">
    <location>
        <begin position="132"/>
        <end position="163"/>
    </location>
</feature>
<feature type="sequence conflict" description="In Ref. 2; BU688150." evidence="5" ref="2">
    <original>G</original>
    <variation>A</variation>
    <location>
        <position position="37"/>
    </location>
</feature>
<dbReference type="EMBL" id="AL592295">
    <property type="status" value="NOT_ANNOTATED_CDS"/>
    <property type="molecule type" value="Genomic_DNA"/>
</dbReference>
<dbReference type="EMBL" id="BU688150">
    <property type="status" value="NOT_ANNOTATED_CDS"/>
    <property type="molecule type" value="mRNA"/>
</dbReference>
<dbReference type="CCDS" id="CCDS30921.1"/>
<dbReference type="RefSeq" id="NP_001013647.2">
    <property type="nucleotide sequence ID" value="NM_001013625.4"/>
</dbReference>
<dbReference type="PDB" id="7UNG">
    <property type="method" value="EM"/>
    <property type="resolution" value="3.60 A"/>
    <property type="chains" value="l/m/n=1-177"/>
</dbReference>
<dbReference type="PDB" id="8J07">
    <property type="method" value="EM"/>
    <property type="resolution" value="4.10 A"/>
    <property type="chains" value="2A/2B/2C/2D/2E/2F/2G=1-177"/>
</dbReference>
<dbReference type="PDBsum" id="7UNG"/>
<dbReference type="PDBsum" id="8J07"/>
<dbReference type="EMDB" id="EMD-26624"/>
<dbReference type="EMDB" id="EMD-35888"/>
<dbReference type="SMR" id="Q5VTH2"/>
<dbReference type="BioGRID" id="129204">
    <property type="interactions" value="1"/>
</dbReference>
<dbReference type="FunCoup" id="Q5VTH2">
    <property type="interactions" value="8"/>
</dbReference>
<dbReference type="STRING" id="9606.ENSP00000356951"/>
<dbReference type="iPTMnet" id="Q5VTH2"/>
<dbReference type="PhosphoSitePlus" id="Q5VTH2"/>
<dbReference type="BioMuta" id="CFAP126"/>
<dbReference type="DMDM" id="74746942"/>
<dbReference type="jPOST" id="Q5VTH2"/>
<dbReference type="MassIVE" id="Q5VTH2"/>
<dbReference type="PaxDb" id="9606-ENSP00000356951"/>
<dbReference type="PeptideAtlas" id="Q5VTH2"/>
<dbReference type="ProteomicsDB" id="65328"/>
<dbReference type="Antibodypedia" id="50104">
    <property type="antibodies" value="46 antibodies from 10 providers"/>
</dbReference>
<dbReference type="DNASU" id="257177"/>
<dbReference type="Ensembl" id="ENST00000367974.2">
    <property type="protein sequence ID" value="ENSP00000356951.1"/>
    <property type="gene ID" value="ENSG00000188931.4"/>
</dbReference>
<dbReference type="GeneID" id="257177"/>
<dbReference type="KEGG" id="hsa:257177"/>
<dbReference type="MANE-Select" id="ENST00000367974.2">
    <property type="protein sequence ID" value="ENSP00000356951.1"/>
    <property type="RefSeq nucleotide sequence ID" value="NM_001013625.4"/>
    <property type="RefSeq protein sequence ID" value="NP_001013647.2"/>
</dbReference>
<dbReference type="UCSC" id="uc001gal.5">
    <property type="organism name" value="human"/>
</dbReference>
<dbReference type="AGR" id="HGNC:32325"/>
<dbReference type="CTD" id="257177"/>
<dbReference type="GeneCards" id="CFAP126"/>
<dbReference type="HGNC" id="HGNC:32325">
    <property type="gene designation" value="CFAP126"/>
</dbReference>
<dbReference type="HPA" id="ENSG00000188931">
    <property type="expression patterns" value="Tissue enhanced (choroid plexus, fallopian tube)"/>
</dbReference>
<dbReference type="MIM" id="616119">
    <property type="type" value="gene"/>
</dbReference>
<dbReference type="neXtProt" id="NX_Q5VTH2"/>
<dbReference type="OpenTargets" id="ENSG00000188931"/>
<dbReference type="PharmGKB" id="PA142672403"/>
<dbReference type="VEuPathDB" id="HostDB:ENSG00000188931"/>
<dbReference type="eggNOG" id="ENOG502S5M4">
    <property type="taxonomic scope" value="Eukaryota"/>
</dbReference>
<dbReference type="GeneTree" id="ENSGT00390000001092"/>
<dbReference type="HOGENOM" id="CLU_108980_0_0_1"/>
<dbReference type="InParanoid" id="Q5VTH2"/>
<dbReference type="OMA" id="TFMGTWQ"/>
<dbReference type="OrthoDB" id="521617at2759"/>
<dbReference type="PAN-GO" id="Q5VTH2">
    <property type="GO annotations" value="2 GO annotations based on evolutionary models"/>
</dbReference>
<dbReference type="PhylomeDB" id="Q5VTH2"/>
<dbReference type="TreeFam" id="TF329474"/>
<dbReference type="PathwayCommons" id="Q5VTH2"/>
<dbReference type="SignaLink" id="Q5VTH2"/>
<dbReference type="BioGRID-ORCS" id="257177">
    <property type="hits" value="9 hits in 1133 CRISPR screens"/>
</dbReference>
<dbReference type="ChiTaRS" id="CFAP126">
    <property type="organism name" value="human"/>
</dbReference>
<dbReference type="GenomeRNAi" id="257177"/>
<dbReference type="Pharos" id="Q5VTH2">
    <property type="development level" value="Tdark"/>
</dbReference>
<dbReference type="PRO" id="PR:Q5VTH2"/>
<dbReference type="Proteomes" id="UP000005640">
    <property type="component" value="Chromosome 1"/>
</dbReference>
<dbReference type="RNAct" id="Q5VTH2">
    <property type="molecule type" value="protein"/>
</dbReference>
<dbReference type="Bgee" id="ENSG00000188931">
    <property type="expression patterns" value="Expressed in right uterine tube and 114 other cell types or tissues"/>
</dbReference>
<dbReference type="GO" id="GO:0016324">
    <property type="term" value="C:apical plasma membrane"/>
    <property type="evidence" value="ECO:0000250"/>
    <property type="project" value="UniProtKB"/>
</dbReference>
<dbReference type="GO" id="GO:0160112">
    <property type="term" value="C:axonemal B tubule inner sheath"/>
    <property type="evidence" value="ECO:0000250"/>
    <property type="project" value="UniProtKB"/>
</dbReference>
<dbReference type="GO" id="GO:0005879">
    <property type="term" value="C:axonemal microtubule"/>
    <property type="evidence" value="ECO:0000314"/>
    <property type="project" value="UniProtKB"/>
</dbReference>
<dbReference type="GO" id="GO:0036064">
    <property type="term" value="C:ciliary basal body"/>
    <property type="evidence" value="ECO:0000250"/>
    <property type="project" value="UniProtKB"/>
</dbReference>
<dbReference type="GO" id="GO:0005929">
    <property type="term" value="C:cilium"/>
    <property type="evidence" value="ECO:0000314"/>
    <property type="project" value="HPA"/>
</dbReference>
<dbReference type="GO" id="GO:0005829">
    <property type="term" value="C:cytosol"/>
    <property type="evidence" value="ECO:0000314"/>
    <property type="project" value="HPA"/>
</dbReference>
<dbReference type="GO" id="GO:0043231">
    <property type="term" value="C:intracellular membrane-bounded organelle"/>
    <property type="evidence" value="ECO:0000314"/>
    <property type="project" value="HPA"/>
</dbReference>
<dbReference type="GO" id="GO:0005886">
    <property type="term" value="C:plasma membrane"/>
    <property type="evidence" value="ECO:0000314"/>
    <property type="project" value="HPA"/>
</dbReference>
<dbReference type="GO" id="GO:0036126">
    <property type="term" value="C:sperm flagellum"/>
    <property type="evidence" value="ECO:0000250"/>
    <property type="project" value="UniProtKB"/>
</dbReference>
<dbReference type="GO" id="GO:0044782">
    <property type="term" value="P:cilium organization"/>
    <property type="evidence" value="ECO:0000250"/>
    <property type="project" value="UniProtKB"/>
</dbReference>
<dbReference type="GO" id="GO:0030317">
    <property type="term" value="P:flagellated sperm motility"/>
    <property type="evidence" value="ECO:0000250"/>
    <property type="project" value="UniProtKB"/>
</dbReference>
<dbReference type="CDD" id="cd23705">
    <property type="entry name" value="Flattop"/>
    <property type="match status" value="1"/>
</dbReference>
<dbReference type="InterPro" id="IPR038797">
    <property type="entry name" value="Fltp"/>
</dbReference>
<dbReference type="PANTHER" id="PTHR34639">
    <property type="entry name" value="PROTEIN FLATTOP"/>
    <property type="match status" value="1"/>
</dbReference>
<dbReference type="PANTHER" id="PTHR34639:SF1">
    <property type="entry name" value="PROTEIN FLATTOP"/>
    <property type="match status" value="1"/>
</dbReference>
<dbReference type="Pfam" id="PF22611">
    <property type="entry name" value="CFAP126"/>
    <property type="match status" value="1"/>
</dbReference>
<comment type="function">
    <text evidence="2 4">Microtubule inner protein (MIP) part of the dynein-decorated doublet microtubules (DMTs) in cilia axoneme (PubMed:36191189). Acts as a regulator of cilium basal body docking and positioning in mono- and multiciliated cells (By similarity). Regulates basal body docking and cilia formation in multiciliated lung cells (By similarity). Regulates kinocilium positioning and stereocilia bundle morphogenesis in the inner ear (By similarity).</text>
</comment>
<comment type="subunit">
    <text evidence="2">Microtubule inner protein component of sperm flagellar doublet microtubules. Interacts with DLG3.</text>
</comment>
<comment type="subcellular location">
    <subcellularLocation>
        <location evidence="2">Cytoplasm</location>
        <location evidence="2">Cytoskeleton</location>
        <location evidence="2">Cilium basal body</location>
    </subcellularLocation>
    <subcellularLocation>
        <location evidence="2">Cell projection</location>
        <location evidence="2">Cilium</location>
    </subcellularLocation>
    <subcellularLocation>
        <location evidence="2">Apical cell membrane</location>
    </subcellularLocation>
    <subcellularLocation>
        <location evidence="4">Cytoplasm</location>
        <location evidence="4">Cytoskeleton</location>
        <location evidence="4">Cilium axoneme</location>
    </subcellularLocation>
    <subcellularLocation>
        <location evidence="2">Cytoplasm</location>
        <location evidence="2">Cytoskeleton</location>
        <location evidence="2">Flagellum axoneme</location>
    </subcellularLocation>
    <text evidence="1 2">Localizes to the apical cell membrane, the basal body and the primary cilium in monociliated node cells (By similarity).</text>
</comment>
<comment type="tissue specificity">
    <text evidence="4">Expressed in airway epithelial cells.</text>
</comment>
<comment type="similarity">
    <text evidence="5">Belongs to the Flattop family.</text>
</comment>
<proteinExistence type="evidence at protein level"/>
<name>FLTOP_HUMAN</name>
<accession>Q5VTH2</accession>
<sequence>MATNYSANQYEKAFSSKYLQNWSPTKPTKESISSHEGYTQIIANDRGHLLPSVPRSKANPWGSFMGTWQMPLKIPPARVTLTSRTTAGAASLTKWIQKNPDLLKASNGLCPEILGKPHDPDSQKKLRKKSITKTVQQARSPTIIPSSPAANLNSPDELQSSHPSAGHTPGPQRPAKS</sequence>
<evidence type="ECO:0000250" key="1">
    <source>
        <dbReference type="UniProtKB" id="Q3SZT6"/>
    </source>
</evidence>
<evidence type="ECO:0000250" key="2">
    <source>
        <dbReference type="UniProtKB" id="Q6P8X9"/>
    </source>
</evidence>
<evidence type="ECO:0000256" key="3">
    <source>
        <dbReference type="SAM" id="MobiDB-lite"/>
    </source>
</evidence>
<evidence type="ECO:0000269" key="4">
    <source>
    </source>
</evidence>
<evidence type="ECO:0000305" key="5"/>
<evidence type="ECO:0000312" key="6">
    <source>
        <dbReference type="HGNC" id="HGNC:32325"/>
    </source>
</evidence>
<evidence type="ECO:0007744" key="7">
    <source>
        <dbReference type="PDB" id="7UNG"/>
    </source>
</evidence>
<organism>
    <name type="scientific">Homo sapiens</name>
    <name type="common">Human</name>
    <dbReference type="NCBI Taxonomy" id="9606"/>
    <lineage>
        <taxon>Eukaryota</taxon>
        <taxon>Metazoa</taxon>
        <taxon>Chordata</taxon>
        <taxon>Craniata</taxon>
        <taxon>Vertebrata</taxon>
        <taxon>Euteleostomi</taxon>
        <taxon>Mammalia</taxon>
        <taxon>Eutheria</taxon>
        <taxon>Euarchontoglires</taxon>
        <taxon>Primates</taxon>
        <taxon>Haplorrhini</taxon>
        <taxon>Catarrhini</taxon>
        <taxon>Hominidae</taxon>
        <taxon>Homo</taxon>
    </lineage>
</organism>
<protein>
    <recommendedName>
        <fullName evidence="5">Protein Flattop</fullName>
    </recommendedName>
    <alternativeName>
        <fullName evidence="6">Cilia- and flagella-associated protein 126</fullName>
    </alternativeName>
</protein>
<keyword id="KW-0002">3D-structure</keyword>
<keyword id="KW-1003">Cell membrane</keyword>
<keyword id="KW-0966">Cell projection</keyword>
<keyword id="KW-0969">Cilium</keyword>
<keyword id="KW-0970">Cilium biogenesis/degradation</keyword>
<keyword id="KW-0963">Cytoplasm</keyword>
<keyword id="KW-0206">Cytoskeleton</keyword>
<keyword id="KW-0282">Flagellum</keyword>
<keyword id="KW-0472">Membrane</keyword>
<keyword id="KW-1267">Proteomics identification</keyword>
<keyword id="KW-1185">Reference proteome</keyword>